<organism>
    <name type="scientific">Bordetella petrii (strain ATCC BAA-461 / DSM 12804 / CCUG 43448)</name>
    <dbReference type="NCBI Taxonomy" id="340100"/>
    <lineage>
        <taxon>Bacteria</taxon>
        <taxon>Pseudomonadati</taxon>
        <taxon>Pseudomonadota</taxon>
        <taxon>Betaproteobacteria</taxon>
        <taxon>Burkholderiales</taxon>
        <taxon>Alcaligenaceae</taxon>
        <taxon>Bordetella</taxon>
    </lineage>
</organism>
<protein>
    <recommendedName>
        <fullName evidence="1">Chorismate synthase</fullName>
        <shortName evidence="1">CS</shortName>
        <ecNumber evidence="1">4.2.3.5</ecNumber>
    </recommendedName>
    <alternativeName>
        <fullName evidence="1">5-enolpyruvylshikimate-3-phosphate phospholyase</fullName>
    </alternativeName>
</protein>
<gene>
    <name evidence="1" type="primary">aroC</name>
    <name type="ordered locus">Bpet3039</name>
</gene>
<keyword id="KW-0028">Amino-acid biosynthesis</keyword>
<keyword id="KW-0057">Aromatic amino acid biosynthesis</keyword>
<keyword id="KW-0274">FAD</keyword>
<keyword id="KW-0285">Flavoprotein</keyword>
<keyword id="KW-0288">FMN</keyword>
<keyword id="KW-0456">Lyase</keyword>
<keyword id="KW-0521">NADP</keyword>
<evidence type="ECO:0000255" key="1">
    <source>
        <dbReference type="HAMAP-Rule" id="MF_00300"/>
    </source>
</evidence>
<name>AROC_BORPD</name>
<proteinExistence type="inferred from homology"/>
<sequence>MSGNTLGTLFCVTNFGESHGPAIGCVVDGCPPGLALDAADIQAELDRRRPGTSRHVTQRQEADQVEILSGVYQGVTTGTPIALLIRNTDARSKDYSNIADTFRPGHADFTYTRKYGLRDPRGGGRSSARLTAPTVAAGAIAKKWLAEHHGVRVRGYMSQLGPIAIPFVSWDDVPANPFYAPNAAIVPELEAYMDQLRRDGDSVGARIEVVAENLPAGWGEPLYDRLDADIAHVMMGLNAVKGVSIGAGFGCIAQRGSEHGDEITPDGFVGNNAGGVLGGISTGQPVTVSLAIKPTSSIRVERRSVNSAGEPVMVQTLGRHDPCVGIRATPIAEAMLALVLIDHALRHRAQCG</sequence>
<feature type="chain" id="PRO_1000115330" description="Chorismate synthase">
    <location>
        <begin position="1"/>
        <end position="352"/>
    </location>
</feature>
<feature type="binding site" evidence="1">
    <location>
        <position position="48"/>
    </location>
    <ligand>
        <name>NADP(+)</name>
        <dbReference type="ChEBI" id="CHEBI:58349"/>
    </ligand>
</feature>
<feature type="binding site" evidence="1">
    <location>
        <position position="54"/>
    </location>
    <ligand>
        <name>NADP(+)</name>
        <dbReference type="ChEBI" id="CHEBI:58349"/>
    </ligand>
</feature>
<feature type="binding site" evidence="1">
    <location>
        <begin position="125"/>
        <end position="127"/>
    </location>
    <ligand>
        <name>FMN</name>
        <dbReference type="ChEBI" id="CHEBI:58210"/>
    </ligand>
</feature>
<feature type="binding site" evidence="1">
    <location>
        <begin position="238"/>
        <end position="239"/>
    </location>
    <ligand>
        <name>FMN</name>
        <dbReference type="ChEBI" id="CHEBI:58210"/>
    </ligand>
</feature>
<feature type="binding site" evidence="1">
    <location>
        <position position="278"/>
    </location>
    <ligand>
        <name>FMN</name>
        <dbReference type="ChEBI" id="CHEBI:58210"/>
    </ligand>
</feature>
<feature type="binding site" evidence="1">
    <location>
        <begin position="293"/>
        <end position="297"/>
    </location>
    <ligand>
        <name>FMN</name>
        <dbReference type="ChEBI" id="CHEBI:58210"/>
    </ligand>
</feature>
<feature type="binding site" evidence="1">
    <location>
        <position position="319"/>
    </location>
    <ligand>
        <name>FMN</name>
        <dbReference type="ChEBI" id="CHEBI:58210"/>
    </ligand>
</feature>
<dbReference type="EC" id="4.2.3.5" evidence="1"/>
<dbReference type="EMBL" id="AM902716">
    <property type="protein sequence ID" value="CAP43381.1"/>
    <property type="molecule type" value="Genomic_DNA"/>
</dbReference>
<dbReference type="SMR" id="A9IT47"/>
<dbReference type="STRING" id="94624.Bpet3039"/>
<dbReference type="KEGG" id="bpt:Bpet3039"/>
<dbReference type="eggNOG" id="COG0082">
    <property type="taxonomic scope" value="Bacteria"/>
</dbReference>
<dbReference type="UniPathway" id="UPA00053">
    <property type="reaction ID" value="UER00090"/>
</dbReference>
<dbReference type="Proteomes" id="UP000001225">
    <property type="component" value="Chromosome"/>
</dbReference>
<dbReference type="GO" id="GO:0005829">
    <property type="term" value="C:cytosol"/>
    <property type="evidence" value="ECO:0007669"/>
    <property type="project" value="TreeGrafter"/>
</dbReference>
<dbReference type="GO" id="GO:0004107">
    <property type="term" value="F:chorismate synthase activity"/>
    <property type="evidence" value="ECO:0007669"/>
    <property type="project" value="UniProtKB-UniRule"/>
</dbReference>
<dbReference type="GO" id="GO:0010181">
    <property type="term" value="F:FMN binding"/>
    <property type="evidence" value="ECO:0007669"/>
    <property type="project" value="TreeGrafter"/>
</dbReference>
<dbReference type="GO" id="GO:0008652">
    <property type="term" value="P:amino acid biosynthetic process"/>
    <property type="evidence" value="ECO:0007669"/>
    <property type="project" value="UniProtKB-KW"/>
</dbReference>
<dbReference type="GO" id="GO:0009073">
    <property type="term" value="P:aromatic amino acid family biosynthetic process"/>
    <property type="evidence" value="ECO:0007669"/>
    <property type="project" value="UniProtKB-KW"/>
</dbReference>
<dbReference type="GO" id="GO:0009423">
    <property type="term" value="P:chorismate biosynthetic process"/>
    <property type="evidence" value="ECO:0007669"/>
    <property type="project" value="UniProtKB-UniRule"/>
</dbReference>
<dbReference type="CDD" id="cd07304">
    <property type="entry name" value="Chorismate_synthase"/>
    <property type="match status" value="1"/>
</dbReference>
<dbReference type="FunFam" id="3.60.150.10:FF:000001">
    <property type="entry name" value="Chorismate synthase"/>
    <property type="match status" value="1"/>
</dbReference>
<dbReference type="Gene3D" id="3.60.150.10">
    <property type="entry name" value="Chorismate synthase AroC"/>
    <property type="match status" value="1"/>
</dbReference>
<dbReference type="HAMAP" id="MF_00300">
    <property type="entry name" value="Chorismate_synth"/>
    <property type="match status" value="1"/>
</dbReference>
<dbReference type="InterPro" id="IPR000453">
    <property type="entry name" value="Chorismate_synth"/>
</dbReference>
<dbReference type="InterPro" id="IPR035904">
    <property type="entry name" value="Chorismate_synth_AroC_sf"/>
</dbReference>
<dbReference type="InterPro" id="IPR020541">
    <property type="entry name" value="Chorismate_synthase_CS"/>
</dbReference>
<dbReference type="NCBIfam" id="TIGR00033">
    <property type="entry name" value="aroC"/>
    <property type="match status" value="1"/>
</dbReference>
<dbReference type="NCBIfam" id="NF003793">
    <property type="entry name" value="PRK05382.1"/>
    <property type="match status" value="1"/>
</dbReference>
<dbReference type="PANTHER" id="PTHR21085">
    <property type="entry name" value="CHORISMATE SYNTHASE"/>
    <property type="match status" value="1"/>
</dbReference>
<dbReference type="PANTHER" id="PTHR21085:SF0">
    <property type="entry name" value="CHORISMATE SYNTHASE"/>
    <property type="match status" value="1"/>
</dbReference>
<dbReference type="Pfam" id="PF01264">
    <property type="entry name" value="Chorismate_synt"/>
    <property type="match status" value="1"/>
</dbReference>
<dbReference type="PIRSF" id="PIRSF001456">
    <property type="entry name" value="Chorismate_synth"/>
    <property type="match status" value="1"/>
</dbReference>
<dbReference type="SUPFAM" id="SSF103263">
    <property type="entry name" value="Chorismate synthase, AroC"/>
    <property type="match status" value="1"/>
</dbReference>
<dbReference type="PROSITE" id="PS00787">
    <property type="entry name" value="CHORISMATE_SYNTHASE_1"/>
    <property type="match status" value="1"/>
</dbReference>
<dbReference type="PROSITE" id="PS00788">
    <property type="entry name" value="CHORISMATE_SYNTHASE_2"/>
    <property type="match status" value="1"/>
</dbReference>
<dbReference type="PROSITE" id="PS00789">
    <property type="entry name" value="CHORISMATE_SYNTHASE_3"/>
    <property type="match status" value="1"/>
</dbReference>
<accession>A9IT47</accession>
<comment type="function">
    <text evidence="1">Catalyzes the anti-1,4-elimination of the C-3 phosphate and the C-6 proR hydrogen from 5-enolpyruvylshikimate-3-phosphate (EPSP) to yield chorismate, which is the branch point compound that serves as the starting substrate for the three terminal pathways of aromatic amino acid biosynthesis. This reaction introduces a second double bond into the aromatic ring system.</text>
</comment>
<comment type="catalytic activity">
    <reaction evidence="1">
        <text>5-O-(1-carboxyvinyl)-3-phosphoshikimate = chorismate + phosphate</text>
        <dbReference type="Rhea" id="RHEA:21020"/>
        <dbReference type="ChEBI" id="CHEBI:29748"/>
        <dbReference type="ChEBI" id="CHEBI:43474"/>
        <dbReference type="ChEBI" id="CHEBI:57701"/>
        <dbReference type="EC" id="4.2.3.5"/>
    </reaction>
</comment>
<comment type="cofactor">
    <cofactor evidence="1">
        <name>FMNH2</name>
        <dbReference type="ChEBI" id="CHEBI:57618"/>
    </cofactor>
    <text evidence="1">Reduced FMN (FMNH(2)).</text>
</comment>
<comment type="pathway">
    <text evidence="1">Metabolic intermediate biosynthesis; chorismate biosynthesis; chorismate from D-erythrose 4-phosphate and phosphoenolpyruvate: step 7/7.</text>
</comment>
<comment type="subunit">
    <text evidence="1">Homotetramer.</text>
</comment>
<comment type="similarity">
    <text evidence="1">Belongs to the chorismate synthase family.</text>
</comment>
<reference key="1">
    <citation type="journal article" date="2008" name="BMC Genomics">
        <title>The missing link: Bordetella petrii is endowed with both the metabolic versatility of environmental bacteria and virulence traits of pathogenic Bordetellae.</title>
        <authorList>
            <person name="Gross R."/>
            <person name="Guzman C.A."/>
            <person name="Sebaihia M."/>
            <person name="Martin dos Santos V.A.P."/>
            <person name="Pieper D.H."/>
            <person name="Koebnik R."/>
            <person name="Lechner M."/>
            <person name="Bartels D."/>
            <person name="Buhrmester J."/>
            <person name="Choudhuri J.V."/>
            <person name="Ebensen T."/>
            <person name="Gaigalat L."/>
            <person name="Herrmann S."/>
            <person name="Khachane A.N."/>
            <person name="Larisch C."/>
            <person name="Link S."/>
            <person name="Linke B."/>
            <person name="Meyer F."/>
            <person name="Mormann S."/>
            <person name="Nakunst D."/>
            <person name="Rueckert C."/>
            <person name="Schneiker-Bekel S."/>
            <person name="Schulze K."/>
            <person name="Voerholter F.-J."/>
            <person name="Yevsa T."/>
            <person name="Engle J.T."/>
            <person name="Goldman W.E."/>
            <person name="Puehler A."/>
            <person name="Goebel U.B."/>
            <person name="Goesmann A."/>
            <person name="Bloecker H."/>
            <person name="Kaiser O."/>
            <person name="Martinez-Arias R."/>
        </authorList>
    </citation>
    <scope>NUCLEOTIDE SEQUENCE [LARGE SCALE GENOMIC DNA]</scope>
    <source>
        <strain>ATCC BAA-461 / DSM 12804 / CCUG 43448</strain>
    </source>
</reference>